<reference key="1">
    <citation type="journal article" date="1996" name="DNA Res.">
        <title>Sequence analysis of the genome of the unicellular cyanobacterium Synechocystis sp. strain PCC6803. II. Sequence determination of the entire genome and assignment of potential protein-coding regions.</title>
        <authorList>
            <person name="Kaneko T."/>
            <person name="Sato S."/>
            <person name="Kotani H."/>
            <person name="Tanaka A."/>
            <person name="Asamizu E."/>
            <person name="Nakamura Y."/>
            <person name="Miyajima N."/>
            <person name="Hirosawa M."/>
            <person name="Sugiura M."/>
            <person name="Sasamoto S."/>
            <person name="Kimura T."/>
            <person name="Hosouchi T."/>
            <person name="Matsuno A."/>
            <person name="Muraki A."/>
            <person name="Nakazaki N."/>
            <person name="Naruo K."/>
            <person name="Okumura S."/>
            <person name="Shimpo S."/>
            <person name="Takeuchi C."/>
            <person name="Wada T."/>
            <person name="Watanabe A."/>
            <person name="Yamada M."/>
            <person name="Yasuda M."/>
            <person name="Tabata S."/>
        </authorList>
    </citation>
    <scope>NUCLEOTIDE SEQUENCE [LARGE SCALE GENOMIC DNA]</scope>
    <source>
        <strain>ATCC 27184 / PCC 6803 / Kazusa</strain>
    </source>
</reference>
<name>PHSG_SYNY3</name>
<keyword id="KW-0021">Allosteric enzyme</keyword>
<keyword id="KW-0119">Carbohydrate metabolism</keyword>
<keyword id="KW-0321">Glycogen metabolism</keyword>
<keyword id="KW-0328">Glycosyltransferase</keyword>
<keyword id="KW-0663">Pyridoxal phosphate</keyword>
<keyword id="KW-1185">Reference proteome</keyword>
<keyword id="KW-0808">Transferase</keyword>
<evidence type="ECO:0000250" key="1"/>
<evidence type="ECO:0000305" key="2"/>
<proteinExistence type="inferred from homology"/>
<comment type="function">
    <text evidence="1">Phosphorylase is an important allosteric enzyme in carbohydrate metabolism. Enzymes from different sources differ in their regulatory mechanisms and in their natural substrates. However, all known phosphorylases share catalytic and structural properties (By similarity).</text>
</comment>
<comment type="catalytic activity">
    <reaction>
        <text>[(1-&gt;4)-alpha-D-glucosyl](n) + phosphate = [(1-&gt;4)-alpha-D-glucosyl](n-1) + alpha-D-glucose 1-phosphate</text>
        <dbReference type="Rhea" id="RHEA:41732"/>
        <dbReference type="Rhea" id="RHEA-COMP:9584"/>
        <dbReference type="Rhea" id="RHEA-COMP:9586"/>
        <dbReference type="ChEBI" id="CHEBI:15444"/>
        <dbReference type="ChEBI" id="CHEBI:43474"/>
        <dbReference type="ChEBI" id="CHEBI:58601"/>
        <dbReference type="EC" id="2.4.1.1"/>
    </reaction>
</comment>
<comment type="cofactor">
    <cofactor evidence="1">
        <name>pyridoxal 5'-phosphate</name>
        <dbReference type="ChEBI" id="CHEBI:597326"/>
    </cofactor>
</comment>
<comment type="similarity">
    <text evidence="2">Belongs to the glycogen phosphorylase family.</text>
</comment>
<sequence>MEHLPMAFNTTNPLIQVEDDRTGLSVETLKRALADNLFYLQGKFPAIATKNDCYMALAYTIRDRLLQRWLNTFQTYLNCDNRVVCYLSAEYLLGPHLGNNLINLGLWEPVQQAVEESGLSLDELIDIEEEPGLGNGGLGRLAACFMDSLATLEIPAIGYGIRYEFGIFDQEIKDGWQVEITDKWLQLGNPWEIARPESAVLVKLGGHTEPYTDDQGNYRVRWIAGSLVKGIPYDTPILGYKVSTANNLRLWKSEAAESFDFQRFNVGDYYGAVQDKMSSENLTKVLYPNDEQIQGKELRLAQQYFFVSCSLQDMIRIHLSDNPTLENFHEHFAVQMNDTHPSIAVAELMRLLVDEHHYEWQRAWAITEATFGFTNHTLLPEALEKWSLPLFGEMLPRHLEIIYEINQRFLDQVRMKYPNDGDRLARLSIIDEAGEKSVRMAYLATVGSHAINGVAALHSQLVKETILKDFYELWPEKFSNKTNGVTPRRWMVLSNPRLSNLISSRIGDGWIKNLDELKQLEPFADLAGFRQDWCKVKREVKQDLARYIHTRTDLVVNPDSLFDVQVKRIHEYKRQHLNILHVIHLYLQIKNNPNLDVTPRTFIYGGKAAPGYFTAKLIIKLINSVADVVNNDPTIGDRLKVIFLPDYNVKFGQRVYPAADLSEQISTAGKEASGTGNMKFSMNGALTIGTLDGANIEIREEVGAENFFLFGLTTPEVEKTLAEGYQPWEYYNNNANLKAVVDLINSGFFSHGDTALFRPLMDSLLGQDPYLVFADFQAYVDCQNQVGEAYKDQENWARMAILNVARMGKFSSDRTIREYAEDIWAIKPVVIELEDLCPDGQCLLISPNK</sequence>
<protein>
    <recommendedName>
        <fullName>Glycogen phosphorylase</fullName>
        <ecNumber>2.4.1.1</ecNumber>
    </recommendedName>
</protein>
<gene>
    <name type="primary">glgP</name>
    <name type="ordered locus">sll1356</name>
</gene>
<accession>P73511</accession>
<feature type="chain" id="PRO_0000188559" description="Glycogen phosphorylase">
    <location>
        <begin position="1"/>
        <end position="849"/>
    </location>
</feature>
<feature type="modified residue" description="N6-(pyridoxal phosphate)lysine" evidence="1">
    <location>
        <position position="679"/>
    </location>
</feature>
<dbReference type="EC" id="2.4.1.1"/>
<dbReference type="EMBL" id="BA000022">
    <property type="protein sequence ID" value="BAA17551.1"/>
    <property type="molecule type" value="Genomic_DNA"/>
</dbReference>
<dbReference type="PIR" id="S77217">
    <property type="entry name" value="S77217"/>
</dbReference>
<dbReference type="SMR" id="P73511"/>
<dbReference type="FunCoup" id="P73511">
    <property type="interactions" value="319"/>
</dbReference>
<dbReference type="IntAct" id="P73511">
    <property type="interactions" value="8"/>
</dbReference>
<dbReference type="STRING" id="1148.gene:10498416"/>
<dbReference type="CAZy" id="GT35">
    <property type="family name" value="Glycosyltransferase Family 35"/>
</dbReference>
<dbReference type="PaxDb" id="1148-1652631"/>
<dbReference type="EnsemblBacteria" id="BAA17551">
    <property type="protein sequence ID" value="BAA17551"/>
    <property type="gene ID" value="BAA17551"/>
</dbReference>
<dbReference type="KEGG" id="syn:sll1356"/>
<dbReference type="eggNOG" id="COG0058">
    <property type="taxonomic scope" value="Bacteria"/>
</dbReference>
<dbReference type="InParanoid" id="P73511"/>
<dbReference type="PhylomeDB" id="P73511"/>
<dbReference type="Proteomes" id="UP000001425">
    <property type="component" value="Chromosome"/>
</dbReference>
<dbReference type="GO" id="GO:0005737">
    <property type="term" value="C:cytoplasm"/>
    <property type="evidence" value="ECO:0000318"/>
    <property type="project" value="GO_Central"/>
</dbReference>
<dbReference type="GO" id="GO:0008184">
    <property type="term" value="F:glycogen phosphorylase activity"/>
    <property type="evidence" value="ECO:0000318"/>
    <property type="project" value="GO_Central"/>
</dbReference>
<dbReference type="GO" id="GO:0030170">
    <property type="term" value="F:pyridoxal phosphate binding"/>
    <property type="evidence" value="ECO:0000318"/>
    <property type="project" value="GO_Central"/>
</dbReference>
<dbReference type="GO" id="GO:0005980">
    <property type="term" value="P:glycogen catabolic process"/>
    <property type="evidence" value="ECO:0000318"/>
    <property type="project" value="GO_Central"/>
</dbReference>
<dbReference type="CDD" id="cd04300">
    <property type="entry name" value="GT35_Glycogen_Phosphorylase"/>
    <property type="match status" value="1"/>
</dbReference>
<dbReference type="FunFam" id="3.40.50.2000:FF:000002">
    <property type="entry name" value="Alpha-1,4 glucan phosphorylase"/>
    <property type="match status" value="1"/>
</dbReference>
<dbReference type="FunFam" id="3.40.50.2000:FF:000005">
    <property type="entry name" value="Alpha-1,4 glucan phosphorylase"/>
    <property type="match status" value="1"/>
</dbReference>
<dbReference type="Gene3D" id="3.40.50.2000">
    <property type="entry name" value="Glycogen Phosphorylase B"/>
    <property type="match status" value="2"/>
</dbReference>
<dbReference type="InterPro" id="IPR011833">
    <property type="entry name" value="Glycg_phsphrylas"/>
</dbReference>
<dbReference type="InterPro" id="IPR000811">
    <property type="entry name" value="Glyco_trans_35"/>
</dbReference>
<dbReference type="InterPro" id="IPR035090">
    <property type="entry name" value="Pyridoxal_P_attach_site"/>
</dbReference>
<dbReference type="NCBIfam" id="TIGR02093">
    <property type="entry name" value="P_ylase"/>
    <property type="match status" value="1"/>
</dbReference>
<dbReference type="PANTHER" id="PTHR11468">
    <property type="entry name" value="GLYCOGEN PHOSPHORYLASE"/>
    <property type="match status" value="1"/>
</dbReference>
<dbReference type="PANTHER" id="PTHR11468:SF3">
    <property type="entry name" value="GLYCOGEN PHOSPHORYLASE, LIVER FORM"/>
    <property type="match status" value="1"/>
</dbReference>
<dbReference type="Pfam" id="PF00343">
    <property type="entry name" value="Phosphorylase"/>
    <property type="match status" value="1"/>
</dbReference>
<dbReference type="PIRSF" id="PIRSF000460">
    <property type="entry name" value="Pprylas_GlgP"/>
    <property type="match status" value="1"/>
</dbReference>
<dbReference type="SUPFAM" id="SSF53756">
    <property type="entry name" value="UDP-Glycosyltransferase/glycogen phosphorylase"/>
    <property type="match status" value="1"/>
</dbReference>
<dbReference type="PROSITE" id="PS00102">
    <property type="entry name" value="PHOSPHORYLASE"/>
    <property type="match status" value="1"/>
</dbReference>
<organism>
    <name type="scientific">Synechocystis sp. (strain ATCC 27184 / PCC 6803 / Kazusa)</name>
    <dbReference type="NCBI Taxonomy" id="1111708"/>
    <lineage>
        <taxon>Bacteria</taxon>
        <taxon>Bacillati</taxon>
        <taxon>Cyanobacteriota</taxon>
        <taxon>Cyanophyceae</taxon>
        <taxon>Synechococcales</taxon>
        <taxon>Merismopediaceae</taxon>
        <taxon>Synechocystis</taxon>
    </lineage>
</organism>